<organism>
    <name type="scientific">Zea mays</name>
    <name type="common">Maize</name>
    <dbReference type="NCBI Taxonomy" id="4577"/>
    <lineage>
        <taxon>Eukaryota</taxon>
        <taxon>Viridiplantae</taxon>
        <taxon>Streptophyta</taxon>
        <taxon>Embryophyta</taxon>
        <taxon>Tracheophyta</taxon>
        <taxon>Spermatophyta</taxon>
        <taxon>Magnoliopsida</taxon>
        <taxon>Liliopsida</taxon>
        <taxon>Poales</taxon>
        <taxon>Poaceae</taxon>
        <taxon>PACMAD clade</taxon>
        <taxon>Panicoideae</taxon>
        <taxon>Andropogonodae</taxon>
        <taxon>Andropogoneae</taxon>
        <taxon>Tripsacinae</taxon>
        <taxon>Zea</taxon>
    </lineage>
</organism>
<name>SIP12_MAIZE</name>
<proteinExistence type="evidence at transcript level"/>
<evidence type="ECO:0000250" key="1"/>
<evidence type="ECO:0000255" key="2"/>
<evidence type="ECO:0000305" key="3"/>
<sequence>MAMGEALRAAAADAVVTFLWVLCVSTLGASTTAVTSYLRLQGVHFALLVTVSLLSVLLFVFNILCDALGGASFNPTGVAAFYAAGVTSPSLFSIALRLPAQAAGAVGGALAISELMPAQYRHMLGGPSLKVDPHTGAGAELVLTFVITLAVLLIIVKGPRNPIIKTWMISICTLCLVLSGAAYTGPSMNPANAFGWAYVNNRHNTWEQFYVYWICPFIGAILAAWIFRAMFLTPPPKPKAKKA</sequence>
<feature type="chain" id="PRO_0000286040" description="Aquaporin SIP1-2">
    <location>
        <begin position="1"/>
        <end position="243"/>
    </location>
</feature>
<feature type="transmembrane region" description="Helical; Name=1" evidence="2">
    <location>
        <begin position="9"/>
        <end position="29"/>
    </location>
</feature>
<feature type="transmembrane region" description="Helical; Name=2" evidence="2">
    <location>
        <begin position="45"/>
        <end position="65"/>
    </location>
</feature>
<feature type="transmembrane region" description="Helical; Name=3" evidence="2">
    <location>
        <begin position="98"/>
        <end position="118"/>
    </location>
</feature>
<feature type="transmembrane region" description="Helical; Name=4" evidence="2">
    <location>
        <begin position="136"/>
        <end position="156"/>
    </location>
</feature>
<feature type="transmembrane region" description="Helical; Name=5" evidence="2">
    <location>
        <begin position="163"/>
        <end position="183"/>
    </location>
</feature>
<feature type="transmembrane region" description="Helical; Name=6" evidence="2">
    <location>
        <begin position="211"/>
        <end position="231"/>
    </location>
</feature>
<feature type="short sequence motif" description="NPA 1" evidence="1">
    <location>
        <begin position="74"/>
        <end position="76"/>
    </location>
</feature>
<feature type="short sequence motif" description="NPA 2" evidence="1">
    <location>
        <begin position="189"/>
        <end position="191"/>
    </location>
</feature>
<keyword id="KW-0472">Membrane</keyword>
<keyword id="KW-1185">Reference proteome</keyword>
<keyword id="KW-0677">Repeat</keyword>
<keyword id="KW-0812">Transmembrane</keyword>
<keyword id="KW-1133">Transmembrane helix</keyword>
<keyword id="KW-0813">Transport</keyword>
<dbReference type="EMBL" id="AF326498">
    <property type="protein sequence ID" value="AAK26765.1"/>
    <property type="molecule type" value="mRNA"/>
</dbReference>
<dbReference type="RefSeq" id="NP_001105028.1">
    <property type="nucleotide sequence ID" value="NM_001111558.1"/>
</dbReference>
<dbReference type="SMR" id="Q9ATM2"/>
<dbReference type="FunCoup" id="Q9ATM2">
    <property type="interactions" value="47"/>
</dbReference>
<dbReference type="STRING" id="4577.Q9ATM2"/>
<dbReference type="PaxDb" id="4577-GRMZM2G060922_P01"/>
<dbReference type="EnsemblPlants" id="Zm00001eb349840_T001">
    <property type="protein sequence ID" value="Zm00001eb349840_P001"/>
    <property type="gene ID" value="Zm00001eb349840"/>
</dbReference>
<dbReference type="GeneID" id="541892"/>
<dbReference type="Gramene" id="Zm00001eb349840_T001">
    <property type="protein sequence ID" value="Zm00001eb349840_P001"/>
    <property type="gene ID" value="Zm00001eb349840"/>
</dbReference>
<dbReference type="KEGG" id="zma:541892"/>
<dbReference type="MaizeGDB" id="403434"/>
<dbReference type="eggNOG" id="KOG0223">
    <property type="taxonomic scope" value="Eukaryota"/>
</dbReference>
<dbReference type="HOGENOM" id="CLU_100006_0_0_1"/>
<dbReference type="InParanoid" id="Q9ATM2"/>
<dbReference type="OMA" id="YVYWITP"/>
<dbReference type="OrthoDB" id="3222at2759"/>
<dbReference type="Proteomes" id="UP000007305">
    <property type="component" value="Chromosome 8"/>
</dbReference>
<dbReference type="ExpressionAtlas" id="Q9ATM2">
    <property type="expression patterns" value="baseline and differential"/>
</dbReference>
<dbReference type="GO" id="GO:0016020">
    <property type="term" value="C:membrane"/>
    <property type="evidence" value="ECO:0007669"/>
    <property type="project" value="UniProtKB-SubCell"/>
</dbReference>
<dbReference type="GO" id="GO:0015250">
    <property type="term" value="F:water channel activity"/>
    <property type="evidence" value="ECO:0007669"/>
    <property type="project" value="InterPro"/>
</dbReference>
<dbReference type="FunFam" id="1.20.1080.10:FF:000043">
    <property type="entry name" value="Aquaporin SIP1-1"/>
    <property type="match status" value="1"/>
</dbReference>
<dbReference type="Gene3D" id="1.20.1080.10">
    <property type="entry name" value="Glycerol uptake facilitator protein"/>
    <property type="match status" value="1"/>
</dbReference>
<dbReference type="InterPro" id="IPR023271">
    <property type="entry name" value="Aquaporin-like"/>
</dbReference>
<dbReference type="InterPro" id="IPR000425">
    <property type="entry name" value="MIP"/>
</dbReference>
<dbReference type="InterPro" id="IPR044222">
    <property type="entry name" value="SIP1-1/2-like"/>
</dbReference>
<dbReference type="PANTHER" id="PTHR46739">
    <property type="entry name" value="AQUAPORIN SIP1-1"/>
    <property type="match status" value="1"/>
</dbReference>
<dbReference type="PANTHER" id="PTHR46739:SF3">
    <property type="entry name" value="AQUAPORIN SIP1-1"/>
    <property type="match status" value="1"/>
</dbReference>
<dbReference type="Pfam" id="PF00230">
    <property type="entry name" value="MIP"/>
    <property type="match status" value="1"/>
</dbReference>
<dbReference type="PRINTS" id="PR00783">
    <property type="entry name" value="MINTRINSICP"/>
</dbReference>
<dbReference type="SUPFAM" id="SSF81338">
    <property type="entry name" value="Aquaporin-like"/>
    <property type="match status" value="1"/>
</dbReference>
<protein>
    <recommendedName>
        <fullName>Aquaporin SIP1-2</fullName>
    </recommendedName>
    <alternativeName>
        <fullName>Small basic intrinsic protein 1-2</fullName>
    </alternativeName>
    <alternativeName>
        <fullName>ZmSIP1-2</fullName>
    </alternativeName>
    <alternativeName>
        <fullName>ZmSIP1;2</fullName>
    </alternativeName>
</protein>
<comment type="function">
    <text evidence="1">Aquaporins facilitate the transport of water and small neutral solutes across cell membranes.</text>
</comment>
<comment type="subcellular location">
    <subcellularLocation>
        <location evidence="3">Membrane</location>
        <topology evidence="3">Multi-pass membrane protein</topology>
    </subcellularLocation>
</comment>
<comment type="domain">
    <text>Aquaporins contain two tandem repeats each containing three membrane-spanning domains and a pore-forming loop with the signature motif Asn-Pro-Ala (NPA).</text>
</comment>
<comment type="similarity">
    <text evidence="3">Belongs to the MIP/aquaporin (TC 1.A.8) family. SIP (TC 1.A.8.10) subfamily.</text>
</comment>
<accession>Q9ATM2</accession>
<gene>
    <name type="primary">SIP1-2</name>
    <name type="synonym">SIP1B</name>
</gene>
<reference key="1">
    <citation type="journal article" date="2001" name="Plant Physiol.">
        <title>Aquaporins constitute a large and highly divergent protein family in maize.</title>
        <authorList>
            <person name="Chaumont F."/>
            <person name="Barrieu F."/>
            <person name="Wojcik E."/>
            <person name="Chrispeels M.J."/>
            <person name="Jung R."/>
        </authorList>
    </citation>
    <scope>NUCLEOTIDE SEQUENCE [MRNA]</scope>
    <scope>GENE FAMILY</scope>
    <scope>NOMENCLATURE</scope>
    <source>
        <strain>cv. B73</strain>
    </source>
</reference>